<feature type="chain" id="PRO_0000429306" description="MATH domain and coiled-coil domain-containing protein At3g58410">
    <location>
        <begin position="1"/>
        <end position="321"/>
    </location>
</feature>
<feature type="domain" description="MATH" evidence="2">
    <location>
        <begin position="6"/>
        <end position="128"/>
    </location>
</feature>
<feature type="coiled-coil region" evidence="1">
    <location>
        <begin position="255"/>
        <end position="310"/>
    </location>
</feature>
<name>MCC29_ARATH</name>
<organism>
    <name type="scientific">Arabidopsis thaliana</name>
    <name type="common">Mouse-ear cress</name>
    <dbReference type="NCBI Taxonomy" id="3702"/>
    <lineage>
        <taxon>Eukaryota</taxon>
        <taxon>Viridiplantae</taxon>
        <taxon>Streptophyta</taxon>
        <taxon>Embryophyta</taxon>
        <taxon>Tracheophyta</taxon>
        <taxon>Spermatophyta</taxon>
        <taxon>Magnoliopsida</taxon>
        <taxon>eudicotyledons</taxon>
        <taxon>Gunneridae</taxon>
        <taxon>Pentapetalae</taxon>
        <taxon>rosids</taxon>
        <taxon>malvids</taxon>
        <taxon>Brassicales</taxon>
        <taxon>Brassicaceae</taxon>
        <taxon>Camelineae</taxon>
        <taxon>Arabidopsis</taxon>
    </lineage>
</organism>
<dbReference type="EMBL" id="AL137081">
    <property type="protein sequence ID" value="CAB68179.1"/>
    <property type="status" value="ALT_SEQ"/>
    <property type="molecule type" value="Genomic_DNA"/>
</dbReference>
<dbReference type="EMBL" id="CP002686">
    <property type="protein sequence ID" value="AEE79778.1"/>
    <property type="status" value="ALT_SEQ"/>
    <property type="molecule type" value="Genomic_DNA"/>
</dbReference>
<dbReference type="EMBL" id="CP002686">
    <property type="protein sequence ID" value="ANM64063.1"/>
    <property type="molecule type" value="Genomic_DNA"/>
</dbReference>
<dbReference type="PIR" id="T46001">
    <property type="entry name" value="T46001"/>
</dbReference>
<dbReference type="RefSeq" id="NP_001326114.1">
    <property type="nucleotide sequence ID" value="NM_001339922.1"/>
</dbReference>
<dbReference type="RefSeq" id="NP_191400.1">
    <property type="nucleotide sequence ID" value="NM_115703.1"/>
</dbReference>
<dbReference type="SMR" id="Q9M2H5"/>
<dbReference type="FunCoup" id="Q9M2H5">
    <property type="interactions" value="53"/>
</dbReference>
<dbReference type="PaxDb" id="3702-AT3G58410.1"/>
<dbReference type="EnsemblPlants" id="AT3G58410.2">
    <property type="protein sequence ID" value="AT3G58410.2"/>
    <property type="gene ID" value="AT3G58410"/>
</dbReference>
<dbReference type="GeneID" id="825010"/>
<dbReference type="Gramene" id="AT3G58410.2">
    <property type="protein sequence ID" value="AT3G58410.2"/>
    <property type="gene ID" value="AT3G58410"/>
</dbReference>
<dbReference type="KEGG" id="ath:AT3G58410"/>
<dbReference type="Araport" id="AT3G58410"/>
<dbReference type="TAIR" id="AT3G58410"/>
<dbReference type="eggNOG" id="KOG1987">
    <property type="taxonomic scope" value="Eukaryota"/>
</dbReference>
<dbReference type="HOGENOM" id="CLU_026537_0_0_1"/>
<dbReference type="InParanoid" id="Q9M2H5"/>
<dbReference type="OMA" id="LIADCKW"/>
<dbReference type="PRO" id="PR:Q9M2H5"/>
<dbReference type="Proteomes" id="UP000006548">
    <property type="component" value="Chromosome 3"/>
</dbReference>
<dbReference type="ExpressionAtlas" id="Q9M2H5">
    <property type="expression patterns" value="baseline and differential"/>
</dbReference>
<dbReference type="CDD" id="cd00121">
    <property type="entry name" value="MATH"/>
    <property type="match status" value="1"/>
</dbReference>
<dbReference type="Gene3D" id="2.60.210.10">
    <property type="entry name" value="Apoptosis, Tumor Necrosis Factor Receptor Associated Protein 2, Chain A"/>
    <property type="match status" value="1"/>
</dbReference>
<dbReference type="InterPro" id="IPR050804">
    <property type="entry name" value="MATH-CC_domain_protein"/>
</dbReference>
<dbReference type="InterPro" id="IPR002083">
    <property type="entry name" value="MATH/TRAF_dom"/>
</dbReference>
<dbReference type="InterPro" id="IPR008974">
    <property type="entry name" value="TRAF-like"/>
</dbReference>
<dbReference type="PANTHER" id="PTHR46236:SF33">
    <property type="entry name" value="MEPRIN AND TRAF-LIKE DOMAIN-CONTAINING PROTEIN-RELATED"/>
    <property type="match status" value="1"/>
</dbReference>
<dbReference type="PANTHER" id="PTHR46236">
    <property type="entry name" value="TRAF-LIKE SUPERFAMILY PROTEIN"/>
    <property type="match status" value="1"/>
</dbReference>
<dbReference type="Pfam" id="PF22486">
    <property type="entry name" value="MATH_2"/>
    <property type="match status" value="1"/>
</dbReference>
<dbReference type="SMART" id="SM00061">
    <property type="entry name" value="MATH"/>
    <property type="match status" value="1"/>
</dbReference>
<dbReference type="SUPFAM" id="SSF49599">
    <property type="entry name" value="TRAF domain-like"/>
    <property type="match status" value="1"/>
</dbReference>
<dbReference type="PROSITE" id="PS50144">
    <property type="entry name" value="MATH"/>
    <property type="match status" value="1"/>
</dbReference>
<keyword id="KW-0175">Coiled coil</keyword>
<keyword id="KW-1185">Reference proteome</keyword>
<comment type="sequence caution" evidence="3">
    <conflict type="erroneous gene model prediction">
        <sequence resource="EMBL-CDS" id="AEE79778"/>
    </conflict>
</comment>
<comment type="sequence caution" evidence="3">
    <conflict type="erroneous gene model prediction">
        <sequence resource="EMBL-CDS" id="CAB68179"/>
    </conflict>
</comment>
<accession>Q9M2H5</accession>
<sequence length="321" mass="37250">MTKQVGKKFAWVIKNFSSLQCKKFYSVPFQIGDCKWRLSIYPKGNNCDYLSLFLEVADFKSLPSGWRRYVKLRLYIVKQLSTLIRKTHRWFDQEMWGWGFLYMLPLTKLHDEKEGFLVNGELMIVAEVDALGFIDPLNESEESEDPTQPLKKIKLNDDGAVSSDLLEEASPRKESMEVNGFQVLPSQVESVRLIFERHPDIASEFRAKNQYLRKACMDFLLSLVETLCQSLQEFSNEDLVEADIALTYLKDAGFKVDWLEKKLDQVRDKKEKERSCLAKLQETEETLLKLKQKCTELDALMDTEKAELSAIRTPLSFEDVV</sequence>
<gene>
    <name type="ordered locus">At3g58410</name>
    <name type="ORF">F9D24.320</name>
</gene>
<proteinExistence type="predicted"/>
<reference key="1">
    <citation type="journal article" date="2000" name="Nature">
        <title>Sequence and analysis of chromosome 3 of the plant Arabidopsis thaliana.</title>
        <authorList>
            <person name="Salanoubat M."/>
            <person name="Lemcke K."/>
            <person name="Rieger M."/>
            <person name="Ansorge W."/>
            <person name="Unseld M."/>
            <person name="Fartmann B."/>
            <person name="Valle G."/>
            <person name="Bloecker H."/>
            <person name="Perez-Alonso M."/>
            <person name="Obermaier B."/>
            <person name="Delseny M."/>
            <person name="Boutry M."/>
            <person name="Grivell L.A."/>
            <person name="Mache R."/>
            <person name="Puigdomenech P."/>
            <person name="De Simone V."/>
            <person name="Choisne N."/>
            <person name="Artiguenave F."/>
            <person name="Robert C."/>
            <person name="Brottier P."/>
            <person name="Wincker P."/>
            <person name="Cattolico L."/>
            <person name="Weissenbach J."/>
            <person name="Saurin W."/>
            <person name="Quetier F."/>
            <person name="Schaefer M."/>
            <person name="Mueller-Auer S."/>
            <person name="Gabel C."/>
            <person name="Fuchs M."/>
            <person name="Benes V."/>
            <person name="Wurmbach E."/>
            <person name="Drzonek H."/>
            <person name="Erfle H."/>
            <person name="Jordan N."/>
            <person name="Bangert S."/>
            <person name="Wiedelmann R."/>
            <person name="Kranz H."/>
            <person name="Voss H."/>
            <person name="Holland R."/>
            <person name="Brandt P."/>
            <person name="Nyakatura G."/>
            <person name="Vezzi A."/>
            <person name="D'Angelo M."/>
            <person name="Pallavicini A."/>
            <person name="Toppo S."/>
            <person name="Simionati B."/>
            <person name="Conrad A."/>
            <person name="Hornischer K."/>
            <person name="Kauer G."/>
            <person name="Loehnert T.-H."/>
            <person name="Nordsiek G."/>
            <person name="Reichelt J."/>
            <person name="Scharfe M."/>
            <person name="Schoen O."/>
            <person name="Bargues M."/>
            <person name="Terol J."/>
            <person name="Climent J."/>
            <person name="Navarro P."/>
            <person name="Collado C."/>
            <person name="Perez-Perez A."/>
            <person name="Ottenwaelder B."/>
            <person name="Duchemin D."/>
            <person name="Cooke R."/>
            <person name="Laudie M."/>
            <person name="Berger-Llauro C."/>
            <person name="Purnelle B."/>
            <person name="Masuy D."/>
            <person name="de Haan M."/>
            <person name="Maarse A.C."/>
            <person name="Alcaraz J.-P."/>
            <person name="Cottet A."/>
            <person name="Casacuberta E."/>
            <person name="Monfort A."/>
            <person name="Argiriou A."/>
            <person name="Flores M."/>
            <person name="Liguori R."/>
            <person name="Vitale D."/>
            <person name="Mannhaupt G."/>
            <person name="Haase D."/>
            <person name="Schoof H."/>
            <person name="Rudd S."/>
            <person name="Zaccaria P."/>
            <person name="Mewes H.-W."/>
            <person name="Mayer K.F.X."/>
            <person name="Kaul S."/>
            <person name="Town C.D."/>
            <person name="Koo H.L."/>
            <person name="Tallon L.J."/>
            <person name="Jenkins J."/>
            <person name="Rooney T."/>
            <person name="Rizzo M."/>
            <person name="Walts A."/>
            <person name="Utterback T."/>
            <person name="Fujii C.Y."/>
            <person name="Shea T.P."/>
            <person name="Creasy T.H."/>
            <person name="Haas B."/>
            <person name="Maiti R."/>
            <person name="Wu D."/>
            <person name="Peterson J."/>
            <person name="Van Aken S."/>
            <person name="Pai G."/>
            <person name="Militscher J."/>
            <person name="Sellers P."/>
            <person name="Gill J.E."/>
            <person name="Feldblyum T.V."/>
            <person name="Preuss D."/>
            <person name="Lin X."/>
            <person name="Nierman W.C."/>
            <person name="Salzberg S.L."/>
            <person name="White O."/>
            <person name="Venter J.C."/>
            <person name="Fraser C.M."/>
            <person name="Kaneko T."/>
            <person name="Nakamura Y."/>
            <person name="Sato S."/>
            <person name="Kato T."/>
            <person name="Asamizu E."/>
            <person name="Sasamoto S."/>
            <person name="Kimura T."/>
            <person name="Idesawa K."/>
            <person name="Kawashima K."/>
            <person name="Kishida Y."/>
            <person name="Kiyokawa C."/>
            <person name="Kohara M."/>
            <person name="Matsumoto M."/>
            <person name="Matsuno A."/>
            <person name="Muraki A."/>
            <person name="Nakayama S."/>
            <person name="Nakazaki N."/>
            <person name="Shinpo S."/>
            <person name="Takeuchi C."/>
            <person name="Wada T."/>
            <person name="Watanabe A."/>
            <person name="Yamada M."/>
            <person name="Yasuda M."/>
            <person name="Tabata S."/>
        </authorList>
    </citation>
    <scope>NUCLEOTIDE SEQUENCE [LARGE SCALE GENOMIC DNA]</scope>
    <source>
        <strain>cv. Columbia</strain>
    </source>
</reference>
<reference key="2">
    <citation type="journal article" date="2017" name="Plant J.">
        <title>Araport11: a complete reannotation of the Arabidopsis thaliana reference genome.</title>
        <authorList>
            <person name="Cheng C.Y."/>
            <person name="Krishnakumar V."/>
            <person name="Chan A.P."/>
            <person name="Thibaud-Nissen F."/>
            <person name="Schobel S."/>
            <person name="Town C.D."/>
        </authorList>
    </citation>
    <scope>GENOME REANNOTATION</scope>
    <source>
        <strain>cv. Columbia</strain>
    </source>
</reference>
<reference key="3">
    <citation type="journal article" date="2010" name="Plant Physiol.">
        <title>RTM3, which controls long-distance movement of potyviruses, is a member of a new plant gene family encoding a meprin and TRAF homology domain-containing protein.</title>
        <authorList>
            <person name="Cosson P."/>
            <person name="Sofer L."/>
            <person name="Le Q.H."/>
            <person name="Leger V."/>
            <person name="Schurdi-Levraud V."/>
            <person name="Whitham S.A."/>
            <person name="Yamamoto M.L."/>
            <person name="Gopalan S."/>
            <person name="Le Gall O."/>
            <person name="Candresse T."/>
            <person name="Carrington J.C."/>
            <person name="Revers F."/>
        </authorList>
    </citation>
    <scope>GENE FAMILY</scope>
</reference>
<protein>
    <recommendedName>
        <fullName>MATH domain and coiled-coil domain-containing protein At3g58410</fullName>
    </recommendedName>
    <alternativeName>
        <fullName>RTM3-like protein At3g58410</fullName>
    </alternativeName>
</protein>
<evidence type="ECO:0000255" key="1"/>
<evidence type="ECO:0000255" key="2">
    <source>
        <dbReference type="PROSITE-ProRule" id="PRU00129"/>
    </source>
</evidence>
<evidence type="ECO:0000305" key="3"/>